<feature type="chain" id="PRO_1000006004" description="DNA-directed RNA polymerase subunit omega">
    <location>
        <begin position="1"/>
        <end position="90"/>
    </location>
</feature>
<sequence length="90" mass="9969">MARITVEDCLDYVDNRFELVIVGSKRARQIATQGKEPLVAPENDKPTVIALREIELGLIDDAFLAATDAEPVEHFAEPSEENADNLYPEA</sequence>
<dbReference type="EC" id="2.7.7.6" evidence="1"/>
<dbReference type="EMBL" id="CP000282">
    <property type="protein sequence ID" value="ABD82951.1"/>
    <property type="molecule type" value="Genomic_DNA"/>
</dbReference>
<dbReference type="RefSeq" id="WP_011470166.1">
    <property type="nucleotide sequence ID" value="NC_007912.1"/>
</dbReference>
<dbReference type="SMR" id="Q21EC8"/>
<dbReference type="STRING" id="203122.Sde_3696"/>
<dbReference type="GeneID" id="98615306"/>
<dbReference type="KEGG" id="sde:Sde_3696"/>
<dbReference type="eggNOG" id="COG1758">
    <property type="taxonomic scope" value="Bacteria"/>
</dbReference>
<dbReference type="HOGENOM" id="CLU_125406_5_3_6"/>
<dbReference type="OrthoDB" id="9796300at2"/>
<dbReference type="Proteomes" id="UP000001947">
    <property type="component" value="Chromosome"/>
</dbReference>
<dbReference type="GO" id="GO:0000428">
    <property type="term" value="C:DNA-directed RNA polymerase complex"/>
    <property type="evidence" value="ECO:0007669"/>
    <property type="project" value="UniProtKB-KW"/>
</dbReference>
<dbReference type="GO" id="GO:0003677">
    <property type="term" value="F:DNA binding"/>
    <property type="evidence" value="ECO:0007669"/>
    <property type="project" value="UniProtKB-UniRule"/>
</dbReference>
<dbReference type="GO" id="GO:0003899">
    <property type="term" value="F:DNA-directed RNA polymerase activity"/>
    <property type="evidence" value="ECO:0007669"/>
    <property type="project" value="UniProtKB-UniRule"/>
</dbReference>
<dbReference type="GO" id="GO:0006351">
    <property type="term" value="P:DNA-templated transcription"/>
    <property type="evidence" value="ECO:0007669"/>
    <property type="project" value="UniProtKB-UniRule"/>
</dbReference>
<dbReference type="Gene3D" id="3.90.940.10">
    <property type="match status" value="1"/>
</dbReference>
<dbReference type="HAMAP" id="MF_00366">
    <property type="entry name" value="RNApol_bact_RpoZ"/>
    <property type="match status" value="1"/>
</dbReference>
<dbReference type="InterPro" id="IPR003716">
    <property type="entry name" value="DNA-dir_RNA_pol_omega"/>
</dbReference>
<dbReference type="InterPro" id="IPR006110">
    <property type="entry name" value="Pol_omega/Rpo6/RPB6"/>
</dbReference>
<dbReference type="InterPro" id="IPR036161">
    <property type="entry name" value="RPB6/omega-like_sf"/>
</dbReference>
<dbReference type="NCBIfam" id="TIGR00690">
    <property type="entry name" value="rpoZ"/>
    <property type="match status" value="1"/>
</dbReference>
<dbReference type="PANTHER" id="PTHR34476">
    <property type="entry name" value="DNA-DIRECTED RNA POLYMERASE SUBUNIT OMEGA"/>
    <property type="match status" value="1"/>
</dbReference>
<dbReference type="PANTHER" id="PTHR34476:SF1">
    <property type="entry name" value="DNA-DIRECTED RNA POLYMERASE SUBUNIT OMEGA"/>
    <property type="match status" value="1"/>
</dbReference>
<dbReference type="Pfam" id="PF01192">
    <property type="entry name" value="RNA_pol_Rpb6"/>
    <property type="match status" value="1"/>
</dbReference>
<dbReference type="SMART" id="SM01409">
    <property type="entry name" value="RNA_pol_Rpb6"/>
    <property type="match status" value="1"/>
</dbReference>
<dbReference type="SUPFAM" id="SSF63562">
    <property type="entry name" value="RPB6/omega subunit-like"/>
    <property type="match status" value="1"/>
</dbReference>
<reference key="1">
    <citation type="journal article" date="2008" name="PLoS Genet.">
        <title>Complete genome sequence of the complex carbohydrate-degrading marine bacterium, Saccharophagus degradans strain 2-40 T.</title>
        <authorList>
            <person name="Weiner R.M."/>
            <person name="Taylor L.E. II"/>
            <person name="Henrissat B."/>
            <person name="Hauser L."/>
            <person name="Land M."/>
            <person name="Coutinho P.M."/>
            <person name="Rancurel C."/>
            <person name="Saunders E.H."/>
            <person name="Longmire A.G."/>
            <person name="Zhang H."/>
            <person name="Bayer E.A."/>
            <person name="Gilbert H.J."/>
            <person name="Larimer F."/>
            <person name="Zhulin I.B."/>
            <person name="Ekborg N.A."/>
            <person name="Lamed R."/>
            <person name="Richardson P.M."/>
            <person name="Borovok I."/>
            <person name="Hutcheson S."/>
        </authorList>
    </citation>
    <scope>NUCLEOTIDE SEQUENCE [LARGE SCALE GENOMIC DNA]</scope>
    <source>
        <strain>2-40 / ATCC 43961 / DSM 17024</strain>
    </source>
</reference>
<protein>
    <recommendedName>
        <fullName evidence="1">DNA-directed RNA polymerase subunit omega</fullName>
        <shortName evidence="1">RNAP omega subunit</shortName>
        <ecNumber evidence="1">2.7.7.6</ecNumber>
    </recommendedName>
    <alternativeName>
        <fullName evidence="1">RNA polymerase omega subunit</fullName>
    </alternativeName>
    <alternativeName>
        <fullName evidence="1">Transcriptase subunit omega</fullName>
    </alternativeName>
</protein>
<keyword id="KW-0240">DNA-directed RNA polymerase</keyword>
<keyword id="KW-0548">Nucleotidyltransferase</keyword>
<keyword id="KW-1185">Reference proteome</keyword>
<keyword id="KW-0804">Transcription</keyword>
<keyword id="KW-0808">Transferase</keyword>
<proteinExistence type="inferred from homology"/>
<organism>
    <name type="scientific">Saccharophagus degradans (strain 2-40 / ATCC 43961 / DSM 17024)</name>
    <dbReference type="NCBI Taxonomy" id="203122"/>
    <lineage>
        <taxon>Bacteria</taxon>
        <taxon>Pseudomonadati</taxon>
        <taxon>Pseudomonadota</taxon>
        <taxon>Gammaproteobacteria</taxon>
        <taxon>Cellvibrionales</taxon>
        <taxon>Cellvibrionaceae</taxon>
        <taxon>Saccharophagus</taxon>
    </lineage>
</organism>
<comment type="function">
    <text evidence="1">Promotes RNA polymerase assembly. Latches the N- and C-terminal regions of the beta' subunit thereby facilitating its interaction with the beta and alpha subunits.</text>
</comment>
<comment type="catalytic activity">
    <reaction evidence="1">
        <text>RNA(n) + a ribonucleoside 5'-triphosphate = RNA(n+1) + diphosphate</text>
        <dbReference type="Rhea" id="RHEA:21248"/>
        <dbReference type="Rhea" id="RHEA-COMP:14527"/>
        <dbReference type="Rhea" id="RHEA-COMP:17342"/>
        <dbReference type="ChEBI" id="CHEBI:33019"/>
        <dbReference type="ChEBI" id="CHEBI:61557"/>
        <dbReference type="ChEBI" id="CHEBI:140395"/>
        <dbReference type="EC" id="2.7.7.6"/>
    </reaction>
</comment>
<comment type="subunit">
    <text evidence="1">The RNAP catalytic core consists of 2 alpha, 1 beta, 1 beta' and 1 omega subunit. When a sigma factor is associated with the core the holoenzyme is formed, which can initiate transcription.</text>
</comment>
<comment type="similarity">
    <text evidence="1">Belongs to the RNA polymerase subunit omega family.</text>
</comment>
<gene>
    <name evidence="1" type="primary">rpoZ</name>
    <name type="ordered locus">Sde_3696</name>
</gene>
<accession>Q21EC8</accession>
<name>RPOZ_SACD2</name>
<evidence type="ECO:0000255" key="1">
    <source>
        <dbReference type="HAMAP-Rule" id="MF_00366"/>
    </source>
</evidence>